<name>MTAP2_PUCGT</name>
<keyword id="KW-0963">Cytoplasm</keyword>
<keyword id="KW-0328">Glycosyltransferase</keyword>
<keyword id="KW-0539">Nucleus</keyword>
<keyword id="KW-0660">Purine salvage</keyword>
<keyword id="KW-1185">Reference proteome</keyword>
<keyword id="KW-0808">Transferase</keyword>
<comment type="function">
    <text evidence="1">Catalyzes the reversible phosphorylation of S-methyl-5'-thioadenosine (MTA) to adenine and 5-methylthioribose-1-phosphate. Involved in the breakdown of MTA, a major by-product of polyamine biosynthesis. Responsible for the first step in the methionine salvage pathway after MTA has been generated from S-adenosylmethionine. Has broad substrate specificity with 6-aminopurine nucleosides as preferred substrates.</text>
</comment>
<comment type="catalytic activity">
    <reaction evidence="1">
        <text>S-methyl-5'-thioadenosine + phosphate = 5-(methylsulfanyl)-alpha-D-ribose 1-phosphate + adenine</text>
        <dbReference type="Rhea" id="RHEA:11852"/>
        <dbReference type="ChEBI" id="CHEBI:16708"/>
        <dbReference type="ChEBI" id="CHEBI:17509"/>
        <dbReference type="ChEBI" id="CHEBI:43474"/>
        <dbReference type="ChEBI" id="CHEBI:58533"/>
        <dbReference type="EC" id="2.4.2.28"/>
    </reaction>
</comment>
<comment type="pathway">
    <text evidence="1">Amino-acid biosynthesis; L-methionine biosynthesis via salvage pathway; S-methyl-5-thio-alpha-D-ribose 1-phosphate from S-methyl-5'-thioadenosine (phosphorylase route): step 1/1.</text>
</comment>
<comment type="subunit">
    <text evidence="1">Homotrimer.</text>
</comment>
<comment type="subcellular location">
    <subcellularLocation>
        <location evidence="1">Cytoplasm</location>
    </subcellularLocation>
    <subcellularLocation>
        <location evidence="1">Nucleus</location>
    </subcellularLocation>
</comment>
<comment type="similarity">
    <text evidence="1">Belongs to the PNP/MTAP phosphorylase family. MTAP subfamily.</text>
</comment>
<reference key="1">
    <citation type="journal article" date="2011" name="Proc. Natl. Acad. Sci. U.S.A.">
        <title>Obligate biotrophy features unraveled by the genomic analysis of rust fungi.</title>
        <authorList>
            <person name="Duplessis S."/>
            <person name="Cuomo C.A."/>
            <person name="Lin Y.-C."/>
            <person name="Aerts A."/>
            <person name="Tisserant E."/>
            <person name="Veneault-Fourrey C."/>
            <person name="Joly D.L."/>
            <person name="Hacquard S."/>
            <person name="Amselem J."/>
            <person name="Cantarel B.L."/>
            <person name="Chiu R."/>
            <person name="Coutinho P.M."/>
            <person name="Feau N."/>
            <person name="Field M."/>
            <person name="Frey P."/>
            <person name="Gelhaye E."/>
            <person name="Goldberg J."/>
            <person name="Grabherr M.G."/>
            <person name="Kodira C.D."/>
            <person name="Kohler A."/>
            <person name="Kuees U."/>
            <person name="Lindquist E.A."/>
            <person name="Lucas S.M."/>
            <person name="Mago R."/>
            <person name="Mauceli E."/>
            <person name="Morin E."/>
            <person name="Murat C."/>
            <person name="Pangilinan J.L."/>
            <person name="Park R."/>
            <person name="Pearson M."/>
            <person name="Quesneville H."/>
            <person name="Rouhier N."/>
            <person name="Sakthikumar S."/>
            <person name="Salamov A.A."/>
            <person name="Schmutz J."/>
            <person name="Selles B."/>
            <person name="Shapiro H."/>
            <person name="Tanguay P."/>
            <person name="Tuskan G.A."/>
            <person name="Henrissat B."/>
            <person name="Van de Peer Y."/>
            <person name="Rouze P."/>
            <person name="Ellis J.G."/>
            <person name="Dodds P.N."/>
            <person name="Schein J.E."/>
            <person name="Zhong S."/>
            <person name="Hamelin R.C."/>
            <person name="Grigoriev I.V."/>
            <person name="Szabo L.J."/>
            <person name="Martin F."/>
        </authorList>
    </citation>
    <scope>NUCLEOTIDE SEQUENCE [LARGE SCALE GENOMIC DNA]</scope>
    <source>
        <strain>CRL 75-36-700-3 / race SCCL</strain>
    </source>
</reference>
<reference key="2">
    <citation type="journal article" date="2017" name="G3 (Bethesda)">
        <title>Comparative analysis highlights variable genome content of wheat rusts and divergence of the mating loci.</title>
        <authorList>
            <person name="Cuomo C.A."/>
            <person name="Bakkeren G."/>
            <person name="Khalil H.B."/>
            <person name="Panwar V."/>
            <person name="Joly D."/>
            <person name="Linning R."/>
            <person name="Sakthikumar S."/>
            <person name="Song X."/>
            <person name="Adiconis X."/>
            <person name="Fan L."/>
            <person name="Goldberg J.M."/>
            <person name="Levin J.Z."/>
            <person name="Young S."/>
            <person name="Zeng Q."/>
            <person name="Anikster Y."/>
            <person name="Bruce M."/>
            <person name="Wang M."/>
            <person name="Yin C."/>
            <person name="McCallum B."/>
            <person name="Szabo L.J."/>
            <person name="Hulbert S."/>
            <person name="Chen X."/>
            <person name="Fellers J.P."/>
        </authorList>
    </citation>
    <scope>GENOME REANNOTATION</scope>
    <source>
        <strain>CRL 75-36-700-3 / race SCCL</strain>
    </source>
</reference>
<protein>
    <recommendedName>
        <fullName evidence="1">S-methyl-5'-thioadenosine phosphorylase 2</fullName>
        <ecNumber evidence="1">2.4.2.28</ecNumber>
    </recommendedName>
    <alternativeName>
        <fullName evidence="1">5'-methylthioadenosine phosphorylase 2</fullName>
        <shortName evidence="1">MTA phosphorylase 2</shortName>
        <shortName evidence="1">MTAP 2</shortName>
        <shortName evidence="1">MTAPase 2</shortName>
    </alternativeName>
</protein>
<feature type="chain" id="PRO_0000415134" description="S-methyl-5'-thioadenosine phosphorylase 2">
    <location>
        <begin position="1"/>
        <end position="290"/>
    </location>
</feature>
<feature type="binding site" evidence="1">
    <location>
        <position position="14"/>
    </location>
    <ligand>
        <name>phosphate</name>
        <dbReference type="ChEBI" id="CHEBI:43474"/>
    </ligand>
</feature>
<feature type="binding site" evidence="1">
    <location>
        <begin position="57"/>
        <end position="58"/>
    </location>
    <ligand>
        <name>phosphate</name>
        <dbReference type="ChEBI" id="CHEBI:43474"/>
    </ligand>
</feature>
<feature type="binding site" evidence="1">
    <location>
        <begin position="90"/>
        <end position="91"/>
    </location>
    <ligand>
        <name>phosphate</name>
        <dbReference type="ChEBI" id="CHEBI:43474"/>
    </ligand>
</feature>
<feature type="binding site" evidence="1">
    <location>
        <position position="185"/>
    </location>
    <ligand>
        <name>substrate</name>
    </ligand>
</feature>
<feature type="binding site" evidence="1">
    <location>
        <position position="186"/>
    </location>
    <ligand>
        <name>phosphate</name>
        <dbReference type="ChEBI" id="CHEBI:43474"/>
    </ligand>
</feature>
<feature type="binding site" evidence="1">
    <location>
        <begin position="209"/>
        <end position="211"/>
    </location>
    <ligand>
        <name>substrate</name>
    </ligand>
</feature>
<feature type="site" description="Important for substrate specificity" evidence="1">
    <location>
        <position position="167"/>
    </location>
</feature>
<feature type="site" description="Important for substrate specificity" evidence="1">
    <location>
        <position position="222"/>
    </location>
</feature>
<proteinExistence type="inferred from homology"/>
<sequence length="290" mass="31504">MTGHAPLVGVIGGSGLYKLEGIEPVESLNIDTPWGRPSSPITLFKLPSGPVVAFLARHGVSHQFTPSEVPSRANIAALKKIGCQVIIAFSAVGSLREEIKPRDIVVPSQIIDRTKSAHAMFGEPFDTELTGLVTKSIKEAVTGFEMNDRIGVHAEKVAICMEGPAFSTRAESNMYRMFGGDIINMSVLPEAKLAREAELSYALIAQITDYDAWRESEEPVTVAEVMATIAANVSVSNRLTLTILDEVHNAVAKGQLKTCKGTMEYSVMTKKEMISEESKKTLSFILPYFS</sequence>
<dbReference type="EC" id="2.4.2.28" evidence="1"/>
<dbReference type="EMBL" id="DS178275">
    <property type="protein sequence ID" value="EFP80451.1"/>
    <property type="molecule type" value="Genomic_DNA"/>
</dbReference>
<dbReference type="RefSeq" id="XP_003324870.1">
    <property type="nucleotide sequence ID" value="XM_003324822.1"/>
</dbReference>
<dbReference type="SMR" id="E3K7C1"/>
<dbReference type="FunCoup" id="E3K7C1">
    <property type="interactions" value="339"/>
</dbReference>
<dbReference type="STRING" id="418459.E3K7C1"/>
<dbReference type="EnsemblFungi" id="EFP80451">
    <property type="protein sequence ID" value="EFP80451"/>
    <property type="gene ID" value="PGTG_06407"/>
</dbReference>
<dbReference type="GeneID" id="10539460"/>
<dbReference type="KEGG" id="pgr:PGTG_06407"/>
<dbReference type="VEuPathDB" id="FungiDB:PGTG_06407"/>
<dbReference type="HOGENOM" id="CLU_054456_0_1_1"/>
<dbReference type="InParanoid" id="E3K7C1"/>
<dbReference type="OMA" id="FVAHVDF"/>
<dbReference type="OrthoDB" id="431409at2759"/>
<dbReference type="UniPathway" id="UPA00904">
    <property type="reaction ID" value="UER00873"/>
</dbReference>
<dbReference type="Proteomes" id="UP000008783">
    <property type="component" value="Unassembled WGS sequence"/>
</dbReference>
<dbReference type="GO" id="GO:0005829">
    <property type="term" value="C:cytosol"/>
    <property type="evidence" value="ECO:0000318"/>
    <property type="project" value="GO_Central"/>
</dbReference>
<dbReference type="GO" id="GO:0005634">
    <property type="term" value="C:nucleus"/>
    <property type="evidence" value="ECO:0007669"/>
    <property type="project" value="UniProtKB-SubCell"/>
</dbReference>
<dbReference type="GO" id="GO:0017061">
    <property type="term" value="F:S-methyl-5-thioadenosine phosphorylase activity"/>
    <property type="evidence" value="ECO:0000318"/>
    <property type="project" value="GO_Central"/>
</dbReference>
<dbReference type="GO" id="GO:0019509">
    <property type="term" value="P:L-methionine salvage from methylthioadenosine"/>
    <property type="evidence" value="ECO:0000318"/>
    <property type="project" value="GO_Central"/>
</dbReference>
<dbReference type="GO" id="GO:0006166">
    <property type="term" value="P:purine ribonucleoside salvage"/>
    <property type="evidence" value="ECO:0007669"/>
    <property type="project" value="UniProtKB-KW"/>
</dbReference>
<dbReference type="CDD" id="cd09010">
    <property type="entry name" value="MTAP_SsMTAPII_like_MTIP"/>
    <property type="match status" value="1"/>
</dbReference>
<dbReference type="FunFam" id="3.40.50.1580:FF:000008">
    <property type="entry name" value="S-methyl-5'-thioadenosine phosphorylase"/>
    <property type="match status" value="1"/>
</dbReference>
<dbReference type="Gene3D" id="3.40.50.1580">
    <property type="entry name" value="Nucleoside phosphorylase domain"/>
    <property type="match status" value="1"/>
</dbReference>
<dbReference type="HAMAP" id="MF_01963">
    <property type="entry name" value="MTAP"/>
    <property type="match status" value="1"/>
</dbReference>
<dbReference type="InterPro" id="IPR010044">
    <property type="entry name" value="MTAP"/>
</dbReference>
<dbReference type="InterPro" id="IPR000845">
    <property type="entry name" value="Nucleoside_phosphorylase_d"/>
</dbReference>
<dbReference type="InterPro" id="IPR035994">
    <property type="entry name" value="Nucleoside_phosphorylase_sf"/>
</dbReference>
<dbReference type="InterPro" id="IPR018099">
    <property type="entry name" value="Purine_phosphorylase-2_CS"/>
</dbReference>
<dbReference type="PANTHER" id="PTHR42679">
    <property type="entry name" value="S-METHYL-5'-THIOADENOSINE PHOSPHORYLASE"/>
    <property type="match status" value="1"/>
</dbReference>
<dbReference type="PANTHER" id="PTHR42679:SF2">
    <property type="entry name" value="S-METHYL-5'-THIOADENOSINE PHOSPHORYLASE"/>
    <property type="match status" value="1"/>
</dbReference>
<dbReference type="Pfam" id="PF01048">
    <property type="entry name" value="PNP_UDP_1"/>
    <property type="match status" value="1"/>
</dbReference>
<dbReference type="SUPFAM" id="SSF53167">
    <property type="entry name" value="Purine and uridine phosphorylases"/>
    <property type="match status" value="1"/>
</dbReference>
<dbReference type="PROSITE" id="PS01240">
    <property type="entry name" value="PNP_MTAP_2"/>
    <property type="match status" value="1"/>
</dbReference>
<organism>
    <name type="scientific">Puccinia graminis f. sp. tritici (strain CRL 75-36-700-3 / race SCCL)</name>
    <name type="common">Black stem rust fungus</name>
    <dbReference type="NCBI Taxonomy" id="418459"/>
    <lineage>
        <taxon>Eukaryota</taxon>
        <taxon>Fungi</taxon>
        <taxon>Dikarya</taxon>
        <taxon>Basidiomycota</taxon>
        <taxon>Pucciniomycotina</taxon>
        <taxon>Pucciniomycetes</taxon>
        <taxon>Pucciniales</taxon>
        <taxon>Pucciniaceae</taxon>
        <taxon>Puccinia</taxon>
    </lineage>
</organism>
<evidence type="ECO:0000255" key="1">
    <source>
        <dbReference type="HAMAP-Rule" id="MF_03155"/>
    </source>
</evidence>
<accession>E3K7C1</accession>
<gene>
    <name type="ORF">PGTG_06407</name>
</gene>